<proteinExistence type="inferred from homology"/>
<gene>
    <name evidence="1" type="primary">rplQ</name>
    <name type="ordered locus">OTT_1069</name>
</gene>
<feature type="chain" id="PRO_1000144459" description="Large ribosomal subunit protein bL17">
    <location>
        <begin position="1"/>
        <end position="145"/>
    </location>
</feature>
<dbReference type="EMBL" id="AP008981">
    <property type="protein sequence ID" value="BAG40527.1"/>
    <property type="molecule type" value="Genomic_DNA"/>
</dbReference>
<dbReference type="RefSeq" id="WP_012461629.1">
    <property type="nucleotide sequence ID" value="NC_010793.1"/>
</dbReference>
<dbReference type="SMR" id="B3CT30"/>
<dbReference type="KEGG" id="ott:OTT_1069"/>
<dbReference type="HOGENOM" id="CLU_074407_2_0_5"/>
<dbReference type="OrthoDB" id="9809073at2"/>
<dbReference type="Proteomes" id="UP000001033">
    <property type="component" value="Chromosome"/>
</dbReference>
<dbReference type="GO" id="GO:0022625">
    <property type="term" value="C:cytosolic large ribosomal subunit"/>
    <property type="evidence" value="ECO:0007669"/>
    <property type="project" value="TreeGrafter"/>
</dbReference>
<dbReference type="GO" id="GO:0003735">
    <property type="term" value="F:structural constituent of ribosome"/>
    <property type="evidence" value="ECO:0007669"/>
    <property type="project" value="InterPro"/>
</dbReference>
<dbReference type="GO" id="GO:0006412">
    <property type="term" value="P:translation"/>
    <property type="evidence" value="ECO:0007669"/>
    <property type="project" value="UniProtKB-UniRule"/>
</dbReference>
<dbReference type="FunFam" id="3.90.1030.10:FF:000001">
    <property type="entry name" value="50S ribosomal protein L17"/>
    <property type="match status" value="1"/>
</dbReference>
<dbReference type="Gene3D" id="3.90.1030.10">
    <property type="entry name" value="Ribosomal protein L17"/>
    <property type="match status" value="1"/>
</dbReference>
<dbReference type="HAMAP" id="MF_01368">
    <property type="entry name" value="Ribosomal_bL17"/>
    <property type="match status" value="1"/>
</dbReference>
<dbReference type="InterPro" id="IPR000456">
    <property type="entry name" value="Ribosomal_bL17"/>
</dbReference>
<dbReference type="InterPro" id="IPR047859">
    <property type="entry name" value="Ribosomal_bL17_CS"/>
</dbReference>
<dbReference type="InterPro" id="IPR036373">
    <property type="entry name" value="Ribosomal_bL17_sf"/>
</dbReference>
<dbReference type="NCBIfam" id="TIGR00059">
    <property type="entry name" value="L17"/>
    <property type="match status" value="1"/>
</dbReference>
<dbReference type="PANTHER" id="PTHR14413:SF16">
    <property type="entry name" value="LARGE RIBOSOMAL SUBUNIT PROTEIN BL17M"/>
    <property type="match status" value="1"/>
</dbReference>
<dbReference type="PANTHER" id="PTHR14413">
    <property type="entry name" value="RIBOSOMAL PROTEIN L17"/>
    <property type="match status" value="1"/>
</dbReference>
<dbReference type="Pfam" id="PF01196">
    <property type="entry name" value="Ribosomal_L17"/>
    <property type="match status" value="1"/>
</dbReference>
<dbReference type="SUPFAM" id="SSF64263">
    <property type="entry name" value="Prokaryotic ribosomal protein L17"/>
    <property type="match status" value="1"/>
</dbReference>
<dbReference type="PROSITE" id="PS01167">
    <property type="entry name" value="RIBOSOMAL_L17"/>
    <property type="match status" value="1"/>
</dbReference>
<name>RL17_ORITI</name>
<keyword id="KW-0687">Ribonucleoprotein</keyword>
<keyword id="KW-0689">Ribosomal protein</keyword>
<organism>
    <name type="scientific">Orientia tsutsugamushi (strain Ikeda)</name>
    <name type="common">Rickettsia tsutsugamushi</name>
    <dbReference type="NCBI Taxonomy" id="334380"/>
    <lineage>
        <taxon>Bacteria</taxon>
        <taxon>Pseudomonadati</taxon>
        <taxon>Pseudomonadota</taxon>
        <taxon>Alphaproteobacteria</taxon>
        <taxon>Rickettsiales</taxon>
        <taxon>Rickettsiaceae</taxon>
        <taxon>Rickettsieae</taxon>
        <taxon>Orientia</taxon>
    </lineage>
</organism>
<protein>
    <recommendedName>
        <fullName evidence="1">Large ribosomal subunit protein bL17</fullName>
    </recommendedName>
    <alternativeName>
        <fullName evidence="2">50S ribosomal protein L17</fullName>
    </alternativeName>
</protein>
<evidence type="ECO:0000255" key="1">
    <source>
        <dbReference type="HAMAP-Rule" id="MF_01368"/>
    </source>
</evidence>
<evidence type="ECO:0000305" key="2"/>
<reference key="1">
    <citation type="journal article" date="2008" name="DNA Res.">
        <title>The whole-genome sequencing of the obligate intracellular bacterium Orientia tsutsugamushi revealed massive gene amplification during reductive genome evolution.</title>
        <authorList>
            <person name="Nakayama K."/>
            <person name="Yamashita A."/>
            <person name="Kurokawa K."/>
            <person name="Morimoto T."/>
            <person name="Ogawa M."/>
            <person name="Fukuhara M."/>
            <person name="Urakami H."/>
            <person name="Ohnishi M."/>
            <person name="Uchiyama I."/>
            <person name="Ogura Y."/>
            <person name="Ooka T."/>
            <person name="Oshima K."/>
            <person name="Tamura A."/>
            <person name="Hattori M."/>
            <person name="Hayashi T."/>
        </authorList>
    </citation>
    <scope>NUCLEOTIDE SEQUENCE [LARGE SCALE GENOMIC DNA]</scope>
    <source>
        <strain>Ikeda</strain>
    </source>
</reference>
<sequence length="145" mass="16597">MRHRVSGRKLNRTTSHLLAMLANMSVSLIQHEQINTTLPKAKELRPFVEKLITVAKKGNLNARRYLISKIKNELAVEKLMTTLAPRYAERHGGYIRILKAGFRYGDMAPMAYIEFVDRNIESKGKEFKALKNDSRNAKLIAEQSN</sequence>
<accession>B3CT30</accession>
<comment type="subunit">
    <text evidence="1">Part of the 50S ribosomal subunit. Contacts protein L32.</text>
</comment>
<comment type="similarity">
    <text evidence="1">Belongs to the bacterial ribosomal protein bL17 family.</text>
</comment>